<gene>
    <name evidence="1" type="primary">pgl</name>
    <name type="ordered locus">YPN_2852</name>
    <name type="ORF">YP516_3225</name>
</gene>
<accession>Q1CFQ1</accession>
<accession>C4GWM3</accession>
<reference key="1">
    <citation type="journal article" date="2006" name="J. Bacteriol.">
        <title>Complete genome sequence of Yersinia pestis strains Antiqua and Nepal516: evidence of gene reduction in an emerging pathogen.</title>
        <authorList>
            <person name="Chain P.S.G."/>
            <person name="Hu P."/>
            <person name="Malfatti S.A."/>
            <person name="Radnedge L."/>
            <person name="Larimer F."/>
            <person name="Vergez L.M."/>
            <person name="Worsham P."/>
            <person name="Chu M.C."/>
            <person name="Andersen G.L."/>
        </authorList>
    </citation>
    <scope>NUCLEOTIDE SEQUENCE [LARGE SCALE GENOMIC DNA]</scope>
    <source>
        <strain>Nepal516</strain>
    </source>
</reference>
<reference key="2">
    <citation type="submission" date="2009-04" db="EMBL/GenBank/DDBJ databases">
        <title>Yersinia pestis Nepal516A whole genome shotgun sequencing project.</title>
        <authorList>
            <person name="Plunkett G. III"/>
            <person name="Anderson B.D."/>
            <person name="Baumler D.J."/>
            <person name="Burland V."/>
            <person name="Cabot E.L."/>
            <person name="Glasner J.D."/>
            <person name="Mau B."/>
            <person name="Neeno-Eckwall E."/>
            <person name="Perna N.T."/>
            <person name="Munk A.C."/>
            <person name="Tapia R."/>
            <person name="Green L.D."/>
            <person name="Rogers Y.C."/>
            <person name="Detter J.C."/>
            <person name="Bruce D.C."/>
            <person name="Brettin T.S."/>
        </authorList>
    </citation>
    <scope>NUCLEOTIDE SEQUENCE [LARGE SCALE GENOMIC DNA]</scope>
    <source>
        <strain>Nepal516</strain>
    </source>
</reference>
<keyword id="KW-0119">Carbohydrate metabolism</keyword>
<keyword id="KW-0313">Glucose metabolism</keyword>
<keyword id="KW-0378">Hydrolase</keyword>
<sequence length="334" mass="36446">MKQAVYVASPDSQQIHVWQLDSAGELTLLQTVDVPGQVQPMAISPNQRHLYVGVRPDFGIVSYHIADDGTLTAAGMAPLPGSPTHIDTDRQGRFLFSASYSFNCVSISPIDTHGVVQAPIQQLDDLPAPHSANIDPTNQILLVPCLKEDKVRLFDLSAEGQLTPHAQADITVAAGAGPRHMAFHPNHQVAYCVNELNSSVDVYQISNNGQEYHLVQSLDAMPADFTGTRWAADIHITPNGRYLYISDRTANLLGIFTVSEDGRVISLVGHHLTEAQPRGFNIDHSGNFLIASGQKSDHIEVYRIDQNTGELTTLKRYPVGKGPMWVSIRGAQNS</sequence>
<dbReference type="EC" id="3.1.1.31" evidence="1"/>
<dbReference type="EMBL" id="CP000305">
    <property type="protein sequence ID" value="ABG19179.1"/>
    <property type="molecule type" value="Genomic_DNA"/>
</dbReference>
<dbReference type="EMBL" id="ACNQ01000017">
    <property type="protein sequence ID" value="EEO75323.1"/>
    <property type="molecule type" value="Genomic_DNA"/>
</dbReference>
<dbReference type="RefSeq" id="WP_002210760.1">
    <property type="nucleotide sequence ID" value="NZ_ACNQ01000017.1"/>
</dbReference>
<dbReference type="SMR" id="Q1CFQ1"/>
<dbReference type="GeneID" id="57977288"/>
<dbReference type="KEGG" id="ypn:YPN_2852"/>
<dbReference type="HOGENOM" id="CLU_038716_2_0_6"/>
<dbReference type="UniPathway" id="UPA00115">
    <property type="reaction ID" value="UER00409"/>
</dbReference>
<dbReference type="Proteomes" id="UP000008936">
    <property type="component" value="Chromosome"/>
</dbReference>
<dbReference type="GO" id="GO:0005829">
    <property type="term" value="C:cytosol"/>
    <property type="evidence" value="ECO:0007669"/>
    <property type="project" value="TreeGrafter"/>
</dbReference>
<dbReference type="GO" id="GO:0017057">
    <property type="term" value="F:6-phosphogluconolactonase activity"/>
    <property type="evidence" value="ECO:0007669"/>
    <property type="project" value="UniProtKB-UniRule"/>
</dbReference>
<dbReference type="GO" id="GO:0006006">
    <property type="term" value="P:glucose metabolic process"/>
    <property type="evidence" value="ECO:0007669"/>
    <property type="project" value="UniProtKB-KW"/>
</dbReference>
<dbReference type="GO" id="GO:0009051">
    <property type="term" value="P:pentose-phosphate shunt, oxidative branch"/>
    <property type="evidence" value="ECO:0007669"/>
    <property type="project" value="UniProtKB-UniRule"/>
</dbReference>
<dbReference type="FunFam" id="2.130.10.10:FF:000051">
    <property type="entry name" value="6-phosphogluconolactonase"/>
    <property type="match status" value="1"/>
</dbReference>
<dbReference type="Gene3D" id="2.130.10.10">
    <property type="entry name" value="YVTN repeat-like/Quinoprotein amine dehydrogenase"/>
    <property type="match status" value="1"/>
</dbReference>
<dbReference type="HAMAP" id="MF_01605">
    <property type="entry name" value="6P_gluconolactonase"/>
    <property type="match status" value="1"/>
</dbReference>
<dbReference type="InterPro" id="IPR022528">
    <property type="entry name" value="6-phosphogluconolactonase_YbhE"/>
</dbReference>
<dbReference type="InterPro" id="IPR050282">
    <property type="entry name" value="Cycloisomerase_2"/>
</dbReference>
<dbReference type="InterPro" id="IPR019405">
    <property type="entry name" value="Lactonase_7-beta_prop"/>
</dbReference>
<dbReference type="InterPro" id="IPR011045">
    <property type="entry name" value="N2O_reductase_N"/>
</dbReference>
<dbReference type="InterPro" id="IPR015943">
    <property type="entry name" value="WD40/YVTN_repeat-like_dom_sf"/>
</dbReference>
<dbReference type="NCBIfam" id="NF008258">
    <property type="entry name" value="PRK11028.1"/>
    <property type="match status" value="1"/>
</dbReference>
<dbReference type="PANTHER" id="PTHR30344:SF1">
    <property type="entry name" value="6-PHOSPHOGLUCONOLACTONASE"/>
    <property type="match status" value="1"/>
</dbReference>
<dbReference type="PANTHER" id="PTHR30344">
    <property type="entry name" value="6-PHOSPHOGLUCONOLACTONASE-RELATED"/>
    <property type="match status" value="1"/>
</dbReference>
<dbReference type="Pfam" id="PF10282">
    <property type="entry name" value="Lactonase"/>
    <property type="match status" value="1"/>
</dbReference>
<dbReference type="SUPFAM" id="SSF50974">
    <property type="entry name" value="Nitrous oxide reductase, N-terminal domain"/>
    <property type="match status" value="1"/>
</dbReference>
<evidence type="ECO:0000255" key="1">
    <source>
        <dbReference type="HAMAP-Rule" id="MF_01605"/>
    </source>
</evidence>
<comment type="function">
    <text evidence="1">Catalyzes the hydrolysis of 6-phosphogluconolactone to 6-phosphogluconate.</text>
</comment>
<comment type="catalytic activity">
    <reaction evidence="1">
        <text>6-phospho-D-glucono-1,5-lactone + H2O = 6-phospho-D-gluconate + H(+)</text>
        <dbReference type="Rhea" id="RHEA:12556"/>
        <dbReference type="ChEBI" id="CHEBI:15377"/>
        <dbReference type="ChEBI" id="CHEBI:15378"/>
        <dbReference type="ChEBI" id="CHEBI:57955"/>
        <dbReference type="ChEBI" id="CHEBI:58759"/>
        <dbReference type="EC" id="3.1.1.31"/>
    </reaction>
</comment>
<comment type="pathway">
    <text evidence="1">Carbohydrate degradation; pentose phosphate pathway; D-ribulose 5-phosphate from D-glucose 6-phosphate (oxidative stage): step 2/3.</text>
</comment>
<comment type="similarity">
    <text evidence="1">Belongs to the cycloisomerase 2 family.</text>
</comment>
<name>6PGL_YERPN</name>
<proteinExistence type="inferred from homology"/>
<feature type="chain" id="PRO_0000291476" description="6-phosphogluconolactonase">
    <location>
        <begin position="1"/>
        <end position="334"/>
    </location>
</feature>
<organism>
    <name type="scientific">Yersinia pestis bv. Antiqua (strain Nepal516)</name>
    <dbReference type="NCBI Taxonomy" id="377628"/>
    <lineage>
        <taxon>Bacteria</taxon>
        <taxon>Pseudomonadati</taxon>
        <taxon>Pseudomonadota</taxon>
        <taxon>Gammaproteobacteria</taxon>
        <taxon>Enterobacterales</taxon>
        <taxon>Yersiniaceae</taxon>
        <taxon>Yersinia</taxon>
    </lineage>
</organism>
<protein>
    <recommendedName>
        <fullName evidence="1">6-phosphogluconolactonase</fullName>
        <shortName evidence="1">6-P-gluconolactonase</shortName>
        <ecNumber evidence="1">3.1.1.31</ecNumber>
    </recommendedName>
</protein>